<protein>
    <recommendedName>
        <fullName evidence="1">Regulator of ribonuclease activity A</fullName>
    </recommendedName>
</protein>
<feature type="chain" id="PRO_1000194871" description="Regulator of ribonuclease activity A">
    <location>
        <begin position="1"/>
        <end position="161"/>
    </location>
</feature>
<sequence length="161" mass="17374">MKYDTSELCDIYQEDVNVVEPLFSNFGGRSSFGGQIITVKCFEDNGLLYDLLEQNGRGRVLLVDGGGSVRRALVDAELARLATQNEWEGLVIYGAVRQVDDLEELDIGIQAIAAIPVGAAGEGIGESDVRVNFGGVTFFSGDHLYADNTGIILSEDPLDIE</sequence>
<comment type="function">
    <text evidence="1">Globally modulates RNA abundance by binding to RNase E (Rne) and regulating its endonucleolytic activity. Can modulate Rne action in a substrate-dependent manner by altering the composition of the degradosome. Modulates RNA-binding and helicase activities of the degradosome.</text>
</comment>
<comment type="subunit">
    <text evidence="1">Homotrimer. Binds to both RNA-binding sites in the C-terminal region of Rne and to RhlB.</text>
</comment>
<comment type="subcellular location">
    <subcellularLocation>
        <location evidence="1">Cytoplasm</location>
    </subcellularLocation>
</comment>
<comment type="similarity">
    <text evidence="1">Belongs to the RraA family.</text>
</comment>
<name>RRAA_SALA4</name>
<proteinExistence type="inferred from homology"/>
<accession>B5F0S0</accession>
<keyword id="KW-0963">Cytoplasm</keyword>
<evidence type="ECO:0000255" key="1">
    <source>
        <dbReference type="HAMAP-Rule" id="MF_00471"/>
    </source>
</evidence>
<gene>
    <name evidence="1" type="primary">rraA</name>
    <name type="ordered locus">SeAg_B4335</name>
</gene>
<dbReference type="EMBL" id="CP001138">
    <property type="protein sequence ID" value="ACH52467.1"/>
    <property type="molecule type" value="Genomic_DNA"/>
</dbReference>
<dbReference type="RefSeq" id="WP_000872918.1">
    <property type="nucleotide sequence ID" value="NC_011149.1"/>
</dbReference>
<dbReference type="SMR" id="B5F0S0"/>
<dbReference type="KEGG" id="sea:SeAg_B4335"/>
<dbReference type="HOGENOM" id="CLU_072626_4_0_6"/>
<dbReference type="Proteomes" id="UP000008819">
    <property type="component" value="Chromosome"/>
</dbReference>
<dbReference type="GO" id="GO:0005829">
    <property type="term" value="C:cytosol"/>
    <property type="evidence" value="ECO:0007669"/>
    <property type="project" value="TreeGrafter"/>
</dbReference>
<dbReference type="GO" id="GO:0060698">
    <property type="term" value="F:endoribonuclease inhibitor activity"/>
    <property type="evidence" value="ECO:0007669"/>
    <property type="project" value="UniProtKB-UniRule"/>
</dbReference>
<dbReference type="GO" id="GO:0019899">
    <property type="term" value="F:enzyme binding"/>
    <property type="evidence" value="ECO:0007669"/>
    <property type="project" value="UniProtKB-UniRule"/>
</dbReference>
<dbReference type="GO" id="GO:1902369">
    <property type="term" value="P:negative regulation of RNA catabolic process"/>
    <property type="evidence" value="ECO:0007669"/>
    <property type="project" value="TreeGrafter"/>
</dbReference>
<dbReference type="CDD" id="cd16841">
    <property type="entry name" value="RraA_family"/>
    <property type="match status" value="1"/>
</dbReference>
<dbReference type="FunFam" id="3.50.30.40:FF:000001">
    <property type="entry name" value="Regulator of ribonuclease activity A"/>
    <property type="match status" value="1"/>
</dbReference>
<dbReference type="Gene3D" id="3.50.30.40">
    <property type="entry name" value="Ribonuclease E inhibitor RraA/RraA-like"/>
    <property type="match status" value="1"/>
</dbReference>
<dbReference type="HAMAP" id="MF_00471">
    <property type="entry name" value="RraA"/>
    <property type="match status" value="1"/>
</dbReference>
<dbReference type="InterPro" id="IPR010203">
    <property type="entry name" value="RraA"/>
</dbReference>
<dbReference type="InterPro" id="IPR005493">
    <property type="entry name" value="RraA/RraA-like"/>
</dbReference>
<dbReference type="InterPro" id="IPR036704">
    <property type="entry name" value="RraA/RraA-like_sf"/>
</dbReference>
<dbReference type="InterPro" id="IPR014339">
    <property type="entry name" value="RraA_gpbac"/>
</dbReference>
<dbReference type="NCBIfam" id="TIGR01935">
    <property type="entry name" value="NOT-MenG"/>
    <property type="match status" value="1"/>
</dbReference>
<dbReference type="NCBIfam" id="NF006875">
    <property type="entry name" value="PRK09372.1"/>
    <property type="match status" value="1"/>
</dbReference>
<dbReference type="NCBIfam" id="TIGR02998">
    <property type="entry name" value="RraA_entero"/>
    <property type="match status" value="1"/>
</dbReference>
<dbReference type="PANTHER" id="PTHR33254">
    <property type="entry name" value="4-HYDROXY-4-METHYL-2-OXOGLUTARATE ALDOLASE 3-RELATED"/>
    <property type="match status" value="1"/>
</dbReference>
<dbReference type="PANTHER" id="PTHR33254:SF29">
    <property type="entry name" value="REGULATOR OF RIBONUCLEASE ACTIVITY A"/>
    <property type="match status" value="1"/>
</dbReference>
<dbReference type="Pfam" id="PF03737">
    <property type="entry name" value="RraA-like"/>
    <property type="match status" value="1"/>
</dbReference>
<dbReference type="SUPFAM" id="SSF89562">
    <property type="entry name" value="RraA-like"/>
    <property type="match status" value="1"/>
</dbReference>
<reference key="1">
    <citation type="journal article" date="2011" name="J. Bacteriol.">
        <title>Comparative genomics of 28 Salmonella enterica isolates: evidence for CRISPR-mediated adaptive sublineage evolution.</title>
        <authorList>
            <person name="Fricke W.F."/>
            <person name="Mammel M.K."/>
            <person name="McDermott P.F."/>
            <person name="Tartera C."/>
            <person name="White D.G."/>
            <person name="Leclerc J.E."/>
            <person name="Ravel J."/>
            <person name="Cebula T.A."/>
        </authorList>
    </citation>
    <scope>NUCLEOTIDE SEQUENCE [LARGE SCALE GENOMIC DNA]</scope>
    <source>
        <strain>SL483</strain>
    </source>
</reference>
<organism>
    <name type="scientific">Salmonella agona (strain SL483)</name>
    <dbReference type="NCBI Taxonomy" id="454166"/>
    <lineage>
        <taxon>Bacteria</taxon>
        <taxon>Pseudomonadati</taxon>
        <taxon>Pseudomonadota</taxon>
        <taxon>Gammaproteobacteria</taxon>
        <taxon>Enterobacterales</taxon>
        <taxon>Enterobacteriaceae</taxon>
        <taxon>Salmonella</taxon>
    </lineage>
</organism>